<protein>
    <recommendedName>
        <fullName>Protein BIG1</fullName>
    </recommendedName>
</protein>
<feature type="signal peptide" evidence="2">
    <location>
        <begin position="1"/>
        <end position="18"/>
    </location>
</feature>
<feature type="chain" id="PRO_0000277848" description="Protein BIG1">
    <location>
        <begin position="19"/>
        <end position="344"/>
    </location>
</feature>
<feature type="topological domain" description="Lumenal" evidence="2">
    <location>
        <begin position="19"/>
        <end position="275"/>
    </location>
</feature>
<feature type="transmembrane region" description="Helical" evidence="2">
    <location>
        <begin position="276"/>
        <end position="296"/>
    </location>
</feature>
<feature type="topological domain" description="Cytoplasmic" evidence="2">
    <location>
        <begin position="297"/>
        <end position="344"/>
    </location>
</feature>
<feature type="glycosylation site" description="N-linked (GlcNAc...) asparagine" evidence="2">
    <location>
        <position position="47"/>
    </location>
</feature>
<proteinExistence type="inferred from homology"/>
<comment type="function">
    <text evidence="1">Required for normal beta-1,6-glucan synthesis.</text>
</comment>
<comment type="subcellular location">
    <subcellularLocation>
        <location evidence="1">Endoplasmic reticulum membrane</location>
        <topology evidence="1">Single-pass type I membrane protein</topology>
    </subcellularLocation>
</comment>
<comment type="similarity">
    <text evidence="3">Belongs to the BIG1 family.</text>
</comment>
<name>BIG1_EREGS</name>
<sequence>MQNVASWLLALVVAVVQGELLPGKSAPALLWSYKLSEGIQEYQLAYNMTTVLPAPEFNAIALELLDHCNSHAYVFVNQPGLRLEDFDYEDAWTVLPNYLSRSSSALRFEQVEVSPSNVFENLIAHTKRRCDVQREIILRAEQTNQFEPYIDAQSRIIQVHFSPLPGDGRNERPSREDVLADHDQRLRRILGRLPSPAVTVIYTSLEPADRLSASPPRAGIFPEIFEHESRRIEYERNDRDLQVNRYFPSHHPKMEPIEEVELSLLDPKFIQSNLKLLKLIAVSAIGSLTWQLYSLFSPKLPVATPKGTAKRQKGQKKLVKLATAQAAKQAEEVKLEVSQQEKED</sequence>
<gene>
    <name type="primary">BIG1</name>
    <name type="ordered locus">ACR093C</name>
</gene>
<reference key="1">
    <citation type="journal article" date="2004" name="Science">
        <title>The Ashbya gossypii genome as a tool for mapping the ancient Saccharomyces cerevisiae genome.</title>
        <authorList>
            <person name="Dietrich F.S."/>
            <person name="Voegeli S."/>
            <person name="Brachat S."/>
            <person name="Lerch A."/>
            <person name="Gates K."/>
            <person name="Steiner S."/>
            <person name="Mohr C."/>
            <person name="Poehlmann R."/>
            <person name="Luedi P."/>
            <person name="Choi S."/>
            <person name="Wing R.A."/>
            <person name="Flavier A."/>
            <person name="Gaffney T.D."/>
            <person name="Philippsen P."/>
        </authorList>
    </citation>
    <scope>NUCLEOTIDE SEQUENCE [LARGE SCALE GENOMIC DNA]</scope>
    <source>
        <strain>ATCC 10895 / CBS 109.51 / FGSC 9923 / NRRL Y-1056</strain>
    </source>
</reference>
<reference key="2">
    <citation type="journal article" date="2013" name="G3 (Bethesda)">
        <title>Genomes of Ashbya fungi isolated from insects reveal four mating-type loci, numerous translocations, lack of transposons, and distinct gene duplications.</title>
        <authorList>
            <person name="Dietrich F.S."/>
            <person name="Voegeli S."/>
            <person name="Kuo S."/>
            <person name="Philippsen P."/>
        </authorList>
    </citation>
    <scope>GENOME REANNOTATION</scope>
    <scope>SEQUENCE REVISION TO 124</scope>
    <source>
        <strain>ATCC 10895 / CBS 109.51 / FGSC 9923 / NRRL Y-1056</strain>
    </source>
</reference>
<keyword id="KW-0961">Cell wall biogenesis/degradation</keyword>
<keyword id="KW-0256">Endoplasmic reticulum</keyword>
<keyword id="KW-0325">Glycoprotein</keyword>
<keyword id="KW-0472">Membrane</keyword>
<keyword id="KW-1185">Reference proteome</keyword>
<keyword id="KW-0732">Signal</keyword>
<keyword id="KW-0812">Transmembrane</keyword>
<keyword id="KW-1133">Transmembrane helix</keyword>
<accession>Q75C24</accession>
<organism>
    <name type="scientific">Eremothecium gossypii (strain ATCC 10895 / CBS 109.51 / FGSC 9923 / NRRL Y-1056)</name>
    <name type="common">Yeast</name>
    <name type="synonym">Ashbya gossypii</name>
    <dbReference type="NCBI Taxonomy" id="284811"/>
    <lineage>
        <taxon>Eukaryota</taxon>
        <taxon>Fungi</taxon>
        <taxon>Dikarya</taxon>
        <taxon>Ascomycota</taxon>
        <taxon>Saccharomycotina</taxon>
        <taxon>Saccharomycetes</taxon>
        <taxon>Saccharomycetales</taxon>
        <taxon>Saccharomycetaceae</taxon>
        <taxon>Eremothecium</taxon>
    </lineage>
</organism>
<dbReference type="EMBL" id="AE016816">
    <property type="protein sequence ID" value="AAS51319.2"/>
    <property type="molecule type" value="Genomic_DNA"/>
</dbReference>
<dbReference type="RefSeq" id="NP_983495.2">
    <property type="nucleotide sequence ID" value="NM_208848.2"/>
</dbReference>
<dbReference type="FunCoup" id="Q75C24">
    <property type="interactions" value="28"/>
</dbReference>
<dbReference type="STRING" id="284811.Q75C24"/>
<dbReference type="GlyCosmos" id="Q75C24">
    <property type="glycosylation" value="1 site, No reported glycans"/>
</dbReference>
<dbReference type="EnsemblFungi" id="AAS51319">
    <property type="protein sequence ID" value="AAS51319"/>
    <property type="gene ID" value="AGOS_ACR093C"/>
</dbReference>
<dbReference type="GeneID" id="4619622"/>
<dbReference type="KEGG" id="ago:AGOS_ACR093C"/>
<dbReference type="eggNOG" id="ENOG502RXHV">
    <property type="taxonomic scope" value="Eukaryota"/>
</dbReference>
<dbReference type="HOGENOM" id="CLU_067894_0_0_1"/>
<dbReference type="InParanoid" id="Q75C24"/>
<dbReference type="OMA" id="PNWNPIR"/>
<dbReference type="OrthoDB" id="9985059at2759"/>
<dbReference type="Proteomes" id="UP000000591">
    <property type="component" value="Chromosome III"/>
</dbReference>
<dbReference type="GO" id="GO:0005789">
    <property type="term" value="C:endoplasmic reticulum membrane"/>
    <property type="evidence" value="ECO:0000318"/>
    <property type="project" value="GO_Central"/>
</dbReference>
<dbReference type="GO" id="GO:0006078">
    <property type="term" value="P:(1-&gt;6)-beta-D-glucan biosynthetic process"/>
    <property type="evidence" value="ECO:0007669"/>
    <property type="project" value="EnsemblFungi"/>
</dbReference>
<dbReference type="GO" id="GO:0071555">
    <property type="term" value="P:cell wall organization"/>
    <property type="evidence" value="ECO:0007669"/>
    <property type="project" value="UniProtKB-KW"/>
</dbReference>
<dbReference type="GO" id="GO:0070072">
    <property type="term" value="P:vacuolar proton-transporting V-type ATPase complex assembly"/>
    <property type="evidence" value="ECO:0007669"/>
    <property type="project" value="EnsemblFungi"/>
</dbReference>
<dbReference type="InterPro" id="IPR037654">
    <property type="entry name" value="Big1"/>
</dbReference>
<dbReference type="PANTHER" id="PTHR28285">
    <property type="entry name" value="PROTEIN BIG1"/>
    <property type="match status" value="1"/>
</dbReference>
<dbReference type="PANTHER" id="PTHR28285:SF1">
    <property type="entry name" value="PROTEIN BIG1"/>
    <property type="match status" value="1"/>
</dbReference>
<evidence type="ECO:0000250" key="1"/>
<evidence type="ECO:0000255" key="2"/>
<evidence type="ECO:0000305" key="3"/>